<reference key="1">
    <citation type="journal article" date="2003" name="Science">
        <title>Genome of Geobacter sulfurreducens: metal reduction in subsurface environments.</title>
        <authorList>
            <person name="Methe B.A."/>
            <person name="Nelson K.E."/>
            <person name="Eisen J.A."/>
            <person name="Paulsen I.T."/>
            <person name="Nelson W.C."/>
            <person name="Heidelberg J.F."/>
            <person name="Wu D."/>
            <person name="Wu M."/>
            <person name="Ward N.L."/>
            <person name="Beanan M.J."/>
            <person name="Dodson R.J."/>
            <person name="Madupu R."/>
            <person name="Brinkac L.M."/>
            <person name="Daugherty S.C."/>
            <person name="DeBoy R.T."/>
            <person name="Durkin A.S."/>
            <person name="Gwinn M.L."/>
            <person name="Kolonay J.F."/>
            <person name="Sullivan S.A."/>
            <person name="Haft D.H."/>
            <person name="Selengut J."/>
            <person name="Davidsen T.M."/>
            <person name="Zafar N."/>
            <person name="White O."/>
            <person name="Tran B."/>
            <person name="Romero C."/>
            <person name="Forberger H.A."/>
            <person name="Weidman J.F."/>
            <person name="Khouri H.M."/>
            <person name="Feldblyum T.V."/>
            <person name="Utterback T.R."/>
            <person name="Van Aken S.E."/>
            <person name="Lovley D.R."/>
            <person name="Fraser C.M."/>
        </authorList>
    </citation>
    <scope>NUCLEOTIDE SEQUENCE [LARGE SCALE GENOMIC DNA]</scope>
    <source>
        <strain>ATCC 51573 / DSM 12127 / PCA</strain>
    </source>
</reference>
<keyword id="KW-0028">Amino-acid biosynthesis</keyword>
<keyword id="KW-0963">Cytoplasm</keyword>
<keyword id="KW-0368">Histidine biosynthesis</keyword>
<keyword id="KW-0413">Isomerase</keyword>
<keyword id="KW-1185">Reference proteome</keyword>
<accession>P60581</accession>
<protein>
    <recommendedName>
        <fullName evidence="1">1-(5-phosphoribosyl)-5-[(5-phosphoribosylamino)methylideneamino] imidazole-4-carboxamide isomerase</fullName>
        <ecNumber evidence="1">5.3.1.16</ecNumber>
    </recommendedName>
    <alternativeName>
        <fullName evidence="1">Phosphoribosylformimino-5-aminoimidazole carboxamide ribotide isomerase</fullName>
    </alternativeName>
</protein>
<name>HIS4_GEOSL</name>
<proteinExistence type="inferred from homology"/>
<organism>
    <name type="scientific">Geobacter sulfurreducens (strain ATCC 51573 / DSM 12127 / PCA)</name>
    <dbReference type="NCBI Taxonomy" id="243231"/>
    <lineage>
        <taxon>Bacteria</taxon>
        <taxon>Pseudomonadati</taxon>
        <taxon>Thermodesulfobacteriota</taxon>
        <taxon>Desulfuromonadia</taxon>
        <taxon>Geobacterales</taxon>
        <taxon>Geobacteraceae</taxon>
        <taxon>Geobacter</taxon>
    </lineage>
</organism>
<evidence type="ECO:0000255" key="1">
    <source>
        <dbReference type="HAMAP-Rule" id="MF_01014"/>
    </source>
</evidence>
<comment type="catalytic activity">
    <reaction evidence="1">
        <text>1-(5-phospho-beta-D-ribosyl)-5-[(5-phospho-beta-D-ribosylamino)methylideneamino]imidazole-4-carboxamide = 5-[(5-phospho-1-deoxy-D-ribulos-1-ylimino)methylamino]-1-(5-phospho-beta-D-ribosyl)imidazole-4-carboxamide</text>
        <dbReference type="Rhea" id="RHEA:15469"/>
        <dbReference type="ChEBI" id="CHEBI:58435"/>
        <dbReference type="ChEBI" id="CHEBI:58525"/>
        <dbReference type="EC" id="5.3.1.16"/>
    </reaction>
</comment>
<comment type="pathway">
    <text evidence="1">Amino-acid biosynthesis; L-histidine biosynthesis; L-histidine from 5-phospho-alpha-D-ribose 1-diphosphate: step 4/9.</text>
</comment>
<comment type="subcellular location">
    <subcellularLocation>
        <location evidence="1">Cytoplasm</location>
    </subcellularLocation>
</comment>
<comment type="similarity">
    <text evidence="1">Belongs to the HisA/HisF family.</text>
</comment>
<feature type="chain" id="PRO_0000142008" description="1-(5-phosphoribosyl)-5-[(5-phosphoribosylamino)methylideneamino] imidazole-4-carboxamide isomerase">
    <location>
        <begin position="1"/>
        <end position="244"/>
    </location>
</feature>
<feature type="active site" description="Proton acceptor" evidence="1">
    <location>
        <position position="8"/>
    </location>
</feature>
<feature type="active site" description="Proton donor" evidence="1">
    <location>
        <position position="129"/>
    </location>
</feature>
<gene>
    <name evidence="1" type="primary">hisA</name>
    <name type="ordered locus">GSU3096</name>
</gene>
<sequence length="244" mass="25536">MIVIPAIDLKEGKCVRLEQGLMEKDTVFCDNPADQAREWERQGAELLHIVDLDGAFAGEPKNRASIEAIVKAIAIPTQLGGGIRDIPTIEAYLSLGIGRVILGTAAQRNPELVEEACRLFPGRIVVGIDAKNGMVAVQGWAEVTGVTAVDLAKRFEGYGVAAIIYTDIARDGMMQGPNIEATRALAEAISIPVIASGGVSSLKDIENLMAIETSGIAGAITGKAVYTGAINLAEAVALTKRGGA</sequence>
<dbReference type="EC" id="5.3.1.16" evidence="1"/>
<dbReference type="EMBL" id="AE017180">
    <property type="protein sequence ID" value="AAR36487.1"/>
    <property type="molecule type" value="Genomic_DNA"/>
</dbReference>
<dbReference type="RefSeq" id="NP_954137.1">
    <property type="nucleotide sequence ID" value="NC_002939.5"/>
</dbReference>
<dbReference type="RefSeq" id="WP_010943717.1">
    <property type="nucleotide sequence ID" value="NC_002939.5"/>
</dbReference>
<dbReference type="SMR" id="P60581"/>
<dbReference type="FunCoup" id="P60581">
    <property type="interactions" value="507"/>
</dbReference>
<dbReference type="STRING" id="243231.GSU3096"/>
<dbReference type="EnsemblBacteria" id="AAR36487">
    <property type="protein sequence ID" value="AAR36487"/>
    <property type="gene ID" value="GSU3096"/>
</dbReference>
<dbReference type="KEGG" id="gsu:GSU3096"/>
<dbReference type="PATRIC" id="fig|243231.5.peg.3120"/>
<dbReference type="eggNOG" id="COG0106">
    <property type="taxonomic scope" value="Bacteria"/>
</dbReference>
<dbReference type="HOGENOM" id="CLU_048577_1_1_7"/>
<dbReference type="InParanoid" id="P60581"/>
<dbReference type="OrthoDB" id="9807749at2"/>
<dbReference type="UniPathway" id="UPA00031">
    <property type="reaction ID" value="UER00009"/>
</dbReference>
<dbReference type="Proteomes" id="UP000000577">
    <property type="component" value="Chromosome"/>
</dbReference>
<dbReference type="GO" id="GO:0005737">
    <property type="term" value="C:cytoplasm"/>
    <property type="evidence" value="ECO:0000318"/>
    <property type="project" value="GO_Central"/>
</dbReference>
<dbReference type="GO" id="GO:0003949">
    <property type="term" value="F:1-(5-phosphoribosyl)-5-[(5-phosphoribosylamino)methylideneamino]imidazole-4-carboxamide isomerase activity"/>
    <property type="evidence" value="ECO:0000318"/>
    <property type="project" value="GO_Central"/>
</dbReference>
<dbReference type="GO" id="GO:0000105">
    <property type="term" value="P:L-histidine biosynthetic process"/>
    <property type="evidence" value="ECO:0000318"/>
    <property type="project" value="GO_Central"/>
</dbReference>
<dbReference type="CDD" id="cd04732">
    <property type="entry name" value="HisA"/>
    <property type="match status" value="1"/>
</dbReference>
<dbReference type="FunFam" id="3.20.20.70:FF:000009">
    <property type="entry name" value="1-(5-phosphoribosyl)-5-[(5-phosphoribosylamino)methylideneamino] imidazole-4-carboxamide isomerase"/>
    <property type="match status" value="1"/>
</dbReference>
<dbReference type="Gene3D" id="3.20.20.70">
    <property type="entry name" value="Aldolase class I"/>
    <property type="match status" value="1"/>
</dbReference>
<dbReference type="HAMAP" id="MF_01014">
    <property type="entry name" value="HisA"/>
    <property type="match status" value="1"/>
</dbReference>
<dbReference type="InterPro" id="IPR013785">
    <property type="entry name" value="Aldolase_TIM"/>
</dbReference>
<dbReference type="InterPro" id="IPR006062">
    <property type="entry name" value="His_biosynth"/>
</dbReference>
<dbReference type="InterPro" id="IPR006063">
    <property type="entry name" value="HisA_bact_arch"/>
</dbReference>
<dbReference type="InterPro" id="IPR044524">
    <property type="entry name" value="Isoase_HisA-like"/>
</dbReference>
<dbReference type="InterPro" id="IPR023016">
    <property type="entry name" value="Isoase_HisA-like_bact"/>
</dbReference>
<dbReference type="InterPro" id="IPR011060">
    <property type="entry name" value="RibuloseP-bd_barrel"/>
</dbReference>
<dbReference type="NCBIfam" id="TIGR00007">
    <property type="entry name" value="1-(5-phosphoribosyl)-5-[(5-phosphoribosylamino)methylideneamino]imidazole-4-carboxamide isomerase"/>
    <property type="match status" value="1"/>
</dbReference>
<dbReference type="NCBIfam" id="NF010112">
    <property type="entry name" value="PRK13585.1"/>
    <property type="match status" value="1"/>
</dbReference>
<dbReference type="PANTHER" id="PTHR43090">
    <property type="entry name" value="1-(5-PHOSPHORIBOSYL)-5-[(5-PHOSPHORIBOSYLAMINO)METHYLIDENEAMINO] IMIDAZOLE-4-CARBOXAMIDE ISOMERASE"/>
    <property type="match status" value="1"/>
</dbReference>
<dbReference type="PANTHER" id="PTHR43090:SF2">
    <property type="entry name" value="1-(5-PHOSPHORIBOSYL)-5-[(5-PHOSPHORIBOSYLAMINO)METHYLIDENEAMINO] IMIDAZOLE-4-CARBOXAMIDE ISOMERASE"/>
    <property type="match status" value="1"/>
</dbReference>
<dbReference type="Pfam" id="PF00977">
    <property type="entry name" value="His_biosynth"/>
    <property type="match status" value="1"/>
</dbReference>
<dbReference type="SUPFAM" id="SSF51366">
    <property type="entry name" value="Ribulose-phoshate binding barrel"/>
    <property type="match status" value="1"/>
</dbReference>